<protein>
    <recommendedName>
        <fullName evidence="1">Acetyl-coenzyme A synthetase</fullName>
        <shortName evidence="1">AcCoA synthetase</shortName>
        <shortName evidence="1">Acs</shortName>
        <ecNumber evidence="1">6.2.1.1</ecNumber>
    </recommendedName>
    <alternativeName>
        <fullName evidence="1">Acetate--CoA ligase</fullName>
    </alternativeName>
    <alternativeName>
        <fullName evidence="1">Acyl-activating enzyme</fullName>
    </alternativeName>
</protein>
<evidence type="ECO:0000255" key="1">
    <source>
        <dbReference type="HAMAP-Rule" id="MF_01123"/>
    </source>
</evidence>
<organism>
    <name type="scientific">Sodalis glossinidius (strain morsitans)</name>
    <dbReference type="NCBI Taxonomy" id="343509"/>
    <lineage>
        <taxon>Bacteria</taxon>
        <taxon>Pseudomonadati</taxon>
        <taxon>Pseudomonadota</taxon>
        <taxon>Gammaproteobacteria</taxon>
        <taxon>Enterobacterales</taxon>
        <taxon>Bruguierivoracaceae</taxon>
        <taxon>Sodalis</taxon>
    </lineage>
</organism>
<feature type="chain" id="PRO_1000065327" description="Acetyl-coenzyme A synthetase">
    <location>
        <begin position="1"/>
        <end position="652"/>
    </location>
</feature>
<feature type="binding site" evidence="1">
    <location>
        <begin position="191"/>
        <end position="194"/>
    </location>
    <ligand>
        <name>CoA</name>
        <dbReference type="ChEBI" id="CHEBI:57287"/>
    </ligand>
</feature>
<feature type="binding site" evidence="1">
    <location>
        <position position="311"/>
    </location>
    <ligand>
        <name>CoA</name>
        <dbReference type="ChEBI" id="CHEBI:57287"/>
    </ligand>
</feature>
<feature type="binding site" evidence="1">
    <location>
        <position position="335"/>
    </location>
    <ligand>
        <name>CoA</name>
        <dbReference type="ChEBI" id="CHEBI:57287"/>
    </ligand>
</feature>
<feature type="binding site" evidence="1">
    <location>
        <begin position="387"/>
        <end position="389"/>
    </location>
    <ligand>
        <name>ATP</name>
        <dbReference type="ChEBI" id="CHEBI:30616"/>
    </ligand>
</feature>
<feature type="binding site" evidence="1">
    <location>
        <begin position="411"/>
        <end position="416"/>
    </location>
    <ligand>
        <name>ATP</name>
        <dbReference type="ChEBI" id="CHEBI:30616"/>
    </ligand>
</feature>
<feature type="binding site" evidence="1">
    <location>
        <position position="500"/>
    </location>
    <ligand>
        <name>ATP</name>
        <dbReference type="ChEBI" id="CHEBI:30616"/>
    </ligand>
</feature>
<feature type="binding site" evidence="1">
    <location>
        <position position="515"/>
    </location>
    <ligand>
        <name>ATP</name>
        <dbReference type="ChEBI" id="CHEBI:30616"/>
    </ligand>
</feature>
<feature type="binding site" evidence="1">
    <location>
        <position position="523"/>
    </location>
    <ligand>
        <name>CoA</name>
        <dbReference type="ChEBI" id="CHEBI:57287"/>
    </ligand>
</feature>
<feature type="binding site" evidence="1">
    <location>
        <position position="526"/>
    </location>
    <ligand>
        <name>ATP</name>
        <dbReference type="ChEBI" id="CHEBI:30616"/>
    </ligand>
</feature>
<feature type="binding site" evidence="1">
    <location>
        <position position="537"/>
    </location>
    <ligand>
        <name>Mg(2+)</name>
        <dbReference type="ChEBI" id="CHEBI:18420"/>
    </ligand>
</feature>
<feature type="binding site" evidence="1">
    <location>
        <position position="539"/>
    </location>
    <ligand>
        <name>Mg(2+)</name>
        <dbReference type="ChEBI" id="CHEBI:18420"/>
    </ligand>
</feature>
<feature type="binding site" evidence="1">
    <location>
        <position position="542"/>
    </location>
    <ligand>
        <name>Mg(2+)</name>
        <dbReference type="ChEBI" id="CHEBI:18420"/>
    </ligand>
</feature>
<feature type="binding site" evidence="1">
    <location>
        <position position="584"/>
    </location>
    <ligand>
        <name>CoA</name>
        <dbReference type="ChEBI" id="CHEBI:57287"/>
    </ligand>
</feature>
<feature type="modified residue" description="N6-acetyllysine" evidence="1">
    <location>
        <position position="609"/>
    </location>
</feature>
<gene>
    <name evidence="1" type="primary">acs</name>
    <name type="ordered locus">SG2122</name>
</gene>
<sequence>MSQPHRYPIPASLAERTLVSAEQYRKLYEQSINDPDSFWREYAQIVEWITPFQTVKNTTFDPGHVNIRWFEDGTLNVAANCLDRHLQERGDQTAIIWEGDDASQSKTLTYRQLHQAVCRFANVLKAQGIGKGDVVALYMPMVPEAAVAMLACARIGAVHSVIFAGFSPEAIAGRIIDSSAKLVVTADEGLRAGRKIPLKKNIDDALNHPEVKSVNRVIVFRRTGNAIDWQPERDVWWHDAIDGADDTCPPEAMGAEDPLFILYTSGSTGTPKGVLHTTGGYLVYAATTFKYVFDYHPGDVYWCTADVGWVTGHSYLLYGPLACCAITLMFEGVPNWPAASRMAQVVDKHQVNILYTAPTAIRALMAEGDKAITGTHRSSLRIMGSVGEPINPEAWEWYYHKIGNGRCPIVDTWWQTETGGFMITPLPGAMALKPGSAALPFFGVQPALVDNVGTPVDGAGEGNLVITDSWPGQARTLYGDHDRFKQTYFYTFKGMYFSGDGARRDEDGYYWITGRVDDVLNVSGHRLGTSEIESALVAHPKIAEAAVVGMPHNIKGQAIYAYITLNAGETPTPELYNEVRAWMRKEIGAIATPDVLHWTDSLPKTRSGKIMRRILRKIAAGDTGNLGDTSTLADPGVVEKLLEEKHTLTLPS</sequence>
<keyword id="KW-0007">Acetylation</keyword>
<keyword id="KW-0067">ATP-binding</keyword>
<keyword id="KW-0436">Ligase</keyword>
<keyword id="KW-0460">Magnesium</keyword>
<keyword id="KW-0479">Metal-binding</keyword>
<keyword id="KW-0547">Nucleotide-binding</keyword>
<reference key="1">
    <citation type="journal article" date="2006" name="Genome Res.">
        <title>Massive genome erosion and functional adaptations provide insights into the symbiotic lifestyle of Sodalis glossinidius in the tsetse host.</title>
        <authorList>
            <person name="Toh H."/>
            <person name="Weiss B.L."/>
            <person name="Perkin S.A.H."/>
            <person name="Yamashita A."/>
            <person name="Oshima K."/>
            <person name="Hattori M."/>
            <person name="Aksoy S."/>
        </authorList>
    </citation>
    <scope>NUCLEOTIDE SEQUENCE [LARGE SCALE GENOMIC DNA]</scope>
    <source>
        <strain>morsitans</strain>
    </source>
</reference>
<proteinExistence type="inferred from homology"/>
<accession>Q2NR28</accession>
<dbReference type="EC" id="6.2.1.1" evidence="1"/>
<dbReference type="EMBL" id="AP008232">
    <property type="protein sequence ID" value="BAE75397.1"/>
    <property type="molecule type" value="Genomic_DNA"/>
</dbReference>
<dbReference type="RefSeq" id="WP_011411934.1">
    <property type="nucleotide sequence ID" value="NC_007712.1"/>
</dbReference>
<dbReference type="SMR" id="Q2NR28"/>
<dbReference type="STRING" id="343509.SG2122"/>
<dbReference type="KEGG" id="sgl:SG2122"/>
<dbReference type="eggNOG" id="COG0365">
    <property type="taxonomic scope" value="Bacteria"/>
</dbReference>
<dbReference type="HOGENOM" id="CLU_000022_3_6_6"/>
<dbReference type="OrthoDB" id="9803968at2"/>
<dbReference type="BioCyc" id="SGLO343509:SGP1_RS19585-MONOMER"/>
<dbReference type="Proteomes" id="UP000001932">
    <property type="component" value="Chromosome"/>
</dbReference>
<dbReference type="GO" id="GO:0005829">
    <property type="term" value="C:cytosol"/>
    <property type="evidence" value="ECO:0007669"/>
    <property type="project" value="TreeGrafter"/>
</dbReference>
<dbReference type="GO" id="GO:0003987">
    <property type="term" value="F:acetate-CoA ligase activity"/>
    <property type="evidence" value="ECO:0007669"/>
    <property type="project" value="UniProtKB-UniRule"/>
</dbReference>
<dbReference type="GO" id="GO:0016208">
    <property type="term" value="F:AMP binding"/>
    <property type="evidence" value="ECO:0007669"/>
    <property type="project" value="InterPro"/>
</dbReference>
<dbReference type="GO" id="GO:0005524">
    <property type="term" value="F:ATP binding"/>
    <property type="evidence" value="ECO:0007669"/>
    <property type="project" value="UniProtKB-KW"/>
</dbReference>
<dbReference type="GO" id="GO:0046872">
    <property type="term" value="F:metal ion binding"/>
    <property type="evidence" value="ECO:0007669"/>
    <property type="project" value="UniProtKB-KW"/>
</dbReference>
<dbReference type="GO" id="GO:0019427">
    <property type="term" value="P:acetyl-CoA biosynthetic process from acetate"/>
    <property type="evidence" value="ECO:0007669"/>
    <property type="project" value="UniProtKB-UniRule"/>
</dbReference>
<dbReference type="GO" id="GO:0006935">
    <property type="term" value="P:chemotaxis"/>
    <property type="evidence" value="ECO:0007669"/>
    <property type="project" value="UniProtKB-UniRule"/>
</dbReference>
<dbReference type="CDD" id="cd05966">
    <property type="entry name" value="ACS"/>
    <property type="match status" value="1"/>
</dbReference>
<dbReference type="FunFam" id="3.30.300.30:FF:000004">
    <property type="entry name" value="Acetyl-coenzyme A synthetase"/>
    <property type="match status" value="1"/>
</dbReference>
<dbReference type="FunFam" id="3.40.50.12780:FF:000001">
    <property type="entry name" value="Acetyl-coenzyme A synthetase"/>
    <property type="match status" value="1"/>
</dbReference>
<dbReference type="Gene3D" id="3.30.300.30">
    <property type="match status" value="1"/>
</dbReference>
<dbReference type="Gene3D" id="3.40.50.12780">
    <property type="entry name" value="N-terminal domain of ligase-like"/>
    <property type="match status" value="1"/>
</dbReference>
<dbReference type="HAMAP" id="MF_01123">
    <property type="entry name" value="Ac_CoA_synth"/>
    <property type="match status" value="1"/>
</dbReference>
<dbReference type="InterPro" id="IPR011904">
    <property type="entry name" value="Ac_CoA_lig"/>
</dbReference>
<dbReference type="InterPro" id="IPR032387">
    <property type="entry name" value="ACAS_N"/>
</dbReference>
<dbReference type="InterPro" id="IPR025110">
    <property type="entry name" value="AMP-bd_C"/>
</dbReference>
<dbReference type="InterPro" id="IPR045851">
    <property type="entry name" value="AMP-bd_C_sf"/>
</dbReference>
<dbReference type="InterPro" id="IPR020845">
    <property type="entry name" value="AMP-binding_CS"/>
</dbReference>
<dbReference type="InterPro" id="IPR000873">
    <property type="entry name" value="AMP-dep_synth/lig_dom"/>
</dbReference>
<dbReference type="InterPro" id="IPR042099">
    <property type="entry name" value="ANL_N_sf"/>
</dbReference>
<dbReference type="NCBIfam" id="TIGR02188">
    <property type="entry name" value="Ac_CoA_lig_AcsA"/>
    <property type="match status" value="1"/>
</dbReference>
<dbReference type="NCBIfam" id="NF001208">
    <property type="entry name" value="PRK00174.1"/>
    <property type="match status" value="1"/>
</dbReference>
<dbReference type="PANTHER" id="PTHR24095">
    <property type="entry name" value="ACETYL-COENZYME A SYNTHETASE"/>
    <property type="match status" value="1"/>
</dbReference>
<dbReference type="PANTHER" id="PTHR24095:SF243">
    <property type="entry name" value="ACETYL-COENZYME A SYNTHETASE"/>
    <property type="match status" value="1"/>
</dbReference>
<dbReference type="Pfam" id="PF16177">
    <property type="entry name" value="ACAS_N"/>
    <property type="match status" value="1"/>
</dbReference>
<dbReference type="Pfam" id="PF00501">
    <property type="entry name" value="AMP-binding"/>
    <property type="match status" value="1"/>
</dbReference>
<dbReference type="Pfam" id="PF13193">
    <property type="entry name" value="AMP-binding_C"/>
    <property type="match status" value="1"/>
</dbReference>
<dbReference type="SUPFAM" id="SSF56801">
    <property type="entry name" value="Acetyl-CoA synthetase-like"/>
    <property type="match status" value="1"/>
</dbReference>
<dbReference type="PROSITE" id="PS00455">
    <property type="entry name" value="AMP_BINDING"/>
    <property type="match status" value="1"/>
</dbReference>
<comment type="function">
    <text evidence="1">Catalyzes the conversion of acetate into acetyl-CoA (AcCoA), an essential intermediate at the junction of anabolic and catabolic pathways. Acs undergoes a two-step reaction. In the first half reaction, Acs combines acetate with ATP to form acetyl-adenylate (AcAMP) intermediate. In the second half reaction, it can then transfer the acetyl group from AcAMP to the sulfhydryl group of CoA, forming the product AcCoA.</text>
</comment>
<comment type="function">
    <text evidence="1">Enables the cell to use acetate during aerobic growth to generate energy via the TCA cycle, and biosynthetic compounds via the glyoxylate shunt. Acetylates CheY, the response regulator involved in flagellar movement and chemotaxis.</text>
</comment>
<comment type="catalytic activity">
    <reaction evidence="1">
        <text>acetate + ATP + CoA = acetyl-CoA + AMP + diphosphate</text>
        <dbReference type="Rhea" id="RHEA:23176"/>
        <dbReference type="ChEBI" id="CHEBI:30089"/>
        <dbReference type="ChEBI" id="CHEBI:30616"/>
        <dbReference type="ChEBI" id="CHEBI:33019"/>
        <dbReference type="ChEBI" id="CHEBI:57287"/>
        <dbReference type="ChEBI" id="CHEBI:57288"/>
        <dbReference type="ChEBI" id="CHEBI:456215"/>
        <dbReference type="EC" id="6.2.1.1"/>
    </reaction>
</comment>
<comment type="cofactor">
    <cofactor evidence="1">
        <name>Mg(2+)</name>
        <dbReference type="ChEBI" id="CHEBI:18420"/>
    </cofactor>
</comment>
<comment type="PTM">
    <text evidence="1">Acetylated. Deacetylation by the SIR2-homolog deacetylase activates the enzyme.</text>
</comment>
<comment type="similarity">
    <text evidence="1">Belongs to the ATP-dependent AMP-binding enzyme family.</text>
</comment>
<name>ACSA_SODGM</name>